<name>ATPD_BARBK</name>
<evidence type="ECO:0000255" key="1">
    <source>
        <dbReference type="HAMAP-Rule" id="MF_01416"/>
    </source>
</evidence>
<feature type="chain" id="PRO_1000184657" description="ATP synthase subunit delta">
    <location>
        <begin position="1"/>
        <end position="194"/>
    </location>
</feature>
<reference key="1">
    <citation type="submission" date="2006-12" db="EMBL/GenBank/DDBJ databases">
        <authorList>
            <person name="Hendrix L."/>
            <person name="Mohamoud Y."/>
            <person name="Radune D."/>
            <person name="Shvartsbeyn A."/>
            <person name="Daugherty S."/>
            <person name="Dodson R."/>
            <person name="Durkin A.S."/>
            <person name="Harkins D."/>
            <person name="Huot H."/>
            <person name="Kothari S.P."/>
            <person name="Madupu R."/>
            <person name="Li J."/>
            <person name="Nelson W.C."/>
            <person name="Shrivastava S."/>
            <person name="Giglio M.G."/>
            <person name="Haft D."/>
            <person name="Selengut J."/>
            <person name="Fraser-Ligget C."/>
            <person name="Seshadri R."/>
        </authorList>
    </citation>
    <scope>NUCLEOTIDE SEQUENCE [LARGE SCALE GENOMIC DNA]</scope>
    <source>
        <strain>ATCC 35685 / KC583 / Herrer 020/F12,63</strain>
    </source>
</reference>
<protein>
    <recommendedName>
        <fullName evidence="1">ATP synthase subunit delta</fullName>
    </recommendedName>
    <alternativeName>
        <fullName evidence="1">ATP synthase F(1) sector subunit delta</fullName>
    </alternativeName>
    <alternativeName>
        <fullName evidence="1">F-type ATPase subunit delta</fullName>
        <shortName evidence="1">F-ATPase subunit delta</shortName>
    </alternativeName>
</protein>
<sequence length="194" mass="20958">MSDSFSLLPLPLVSQRYAHALFDLVQKEGYVGDVEKALASFQVILEQDKALKHLVQSPFLSVKEQVKAVCAVCENLGLAHKKAGQILRNFLCVVAANRRLSALSGILQAFQRRVALSRGEVSAQVISAHPLDADQKKELCVALESVVGGKVTLRLSVDPAILGGLIVRLGLYQIDTSLATQLSSLKLALKKEVS</sequence>
<dbReference type="EMBL" id="CP000524">
    <property type="protein sequence ID" value="ABM44925.1"/>
    <property type="molecule type" value="Genomic_DNA"/>
</dbReference>
<dbReference type="RefSeq" id="WP_005765868.1">
    <property type="nucleotide sequence ID" value="NC_008783.1"/>
</dbReference>
<dbReference type="SMR" id="A1UR46"/>
<dbReference type="STRING" id="360095.BARBAKC583_0111"/>
<dbReference type="GeneID" id="4684725"/>
<dbReference type="KEGG" id="bbk:BARBAKC583_0111"/>
<dbReference type="PATRIC" id="fig|360095.6.peg.110"/>
<dbReference type="eggNOG" id="COG0712">
    <property type="taxonomic scope" value="Bacteria"/>
</dbReference>
<dbReference type="HOGENOM" id="CLU_085114_0_1_5"/>
<dbReference type="OrthoDB" id="9796185at2"/>
<dbReference type="Proteomes" id="UP000000643">
    <property type="component" value="Chromosome"/>
</dbReference>
<dbReference type="GO" id="GO:0005886">
    <property type="term" value="C:plasma membrane"/>
    <property type="evidence" value="ECO:0007669"/>
    <property type="project" value="UniProtKB-SubCell"/>
</dbReference>
<dbReference type="GO" id="GO:0045259">
    <property type="term" value="C:proton-transporting ATP synthase complex"/>
    <property type="evidence" value="ECO:0007669"/>
    <property type="project" value="UniProtKB-KW"/>
</dbReference>
<dbReference type="GO" id="GO:0046933">
    <property type="term" value="F:proton-transporting ATP synthase activity, rotational mechanism"/>
    <property type="evidence" value="ECO:0007669"/>
    <property type="project" value="UniProtKB-UniRule"/>
</dbReference>
<dbReference type="Gene3D" id="1.10.520.20">
    <property type="entry name" value="N-terminal domain of the delta subunit of the F1F0-ATP synthase"/>
    <property type="match status" value="1"/>
</dbReference>
<dbReference type="HAMAP" id="MF_01416">
    <property type="entry name" value="ATP_synth_delta_bact"/>
    <property type="match status" value="1"/>
</dbReference>
<dbReference type="InterPro" id="IPR026015">
    <property type="entry name" value="ATP_synth_OSCP/delta_N_sf"/>
</dbReference>
<dbReference type="InterPro" id="IPR020781">
    <property type="entry name" value="ATPase_OSCP/d_CS"/>
</dbReference>
<dbReference type="InterPro" id="IPR000711">
    <property type="entry name" value="ATPase_OSCP/dsu"/>
</dbReference>
<dbReference type="NCBIfam" id="TIGR01145">
    <property type="entry name" value="ATP_synt_delta"/>
    <property type="match status" value="1"/>
</dbReference>
<dbReference type="NCBIfam" id="NF004406">
    <property type="entry name" value="PRK05758.3-2"/>
    <property type="match status" value="1"/>
</dbReference>
<dbReference type="PANTHER" id="PTHR11910">
    <property type="entry name" value="ATP SYNTHASE DELTA CHAIN"/>
    <property type="match status" value="1"/>
</dbReference>
<dbReference type="Pfam" id="PF00213">
    <property type="entry name" value="OSCP"/>
    <property type="match status" value="1"/>
</dbReference>
<dbReference type="PRINTS" id="PR00125">
    <property type="entry name" value="ATPASEDELTA"/>
</dbReference>
<dbReference type="SUPFAM" id="SSF47928">
    <property type="entry name" value="N-terminal domain of the delta subunit of the F1F0-ATP synthase"/>
    <property type="match status" value="1"/>
</dbReference>
<dbReference type="PROSITE" id="PS00389">
    <property type="entry name" value="ATPASE_DELTA"/>
    <property type="match status" value="1"/>
</dbReference>
<accession>A1UR46</accession>
<proteinExistence type="inferred from homology"/>
<organism>
    <name type="scientific">Bartonella bacilliformis (strain ATCC 35685 / KC583 / Herrer 020/F12,63)</name>
    <dbReference type="NCBI Taxonomy" id="360095"/>
    <lineage>
        <taxon>Bacteria</taxon>
        <taxon>Pseudomonadati</taxon>
        <taxon>Pseudomonadota</taxon>
        <taxon>Alphaproteobacteria</taxon>
        <taxon>Hyphomicrobiales</taxon>
        <taxon>Bartonellaceae</taxon>
        <taxon>Bartonella</taxon>
    </lineage>
</organism>
<keyword id="KW-0066">ATP synthesis</keyword>
<keyword id="KW-0997">Cell inner membrane</keyword>
<keyword id="KW-1003">Cell membrane</keyword>
<keyword id="KW-0139">CF(1)</keyword>
<keyword id="KW-0375">Hydrogen ion transport</keyword>
<keyword id="KW-0406">Ion transport</keyword>
<keyword id="KW-0472">Membrane</keyword>
<keyword id="KW-0813">Transport</keyword>
<gene>
    <name evidence="1" type="primary">atpH</name>
    <name type="ordered locus">BARBAKC583_0111</name>
</gene>
<comment type="function">
    <text evidence="1">F(1)F(0) ATP synthase produces ATP from ADP in the presence of a proton or sodium gradient. F-type ATPases consist of two structural domains, F(1) containing the extramembraneous catalytic core and F(0) containing the membrane proton channel, linked together by a central stalk and a peripheral stalk. During catalysis, ATP synthesis in the catalytic domain of F(1) is coupled via a rotary mechanism of the central stalk subunits to proton translocation.</text>
</comment>
<comment type="function">
    <text evidence="1">This protein is part of the stalk that links CF(0) to CF(1). It either transmits conformational changes from CF(0) to CF(1) or is implicated in proton conduction.</text>
</comment>
<comment type="subunit">
    <text evidence="1">F-type ATPases have 2 components, F(1) - the catalytic core - and F(0) - the membrane proton channel. F(1) has five subunits: alpha(3), beta(3), gamma(1), delta(1), epsilon(1). F(0) has three main subunits: a(1), b(2) and c(10-14). The alpha and beta chains form an alternating ring which encloses part of the gamma chain. F(1) is attached to F(0) by a central stalk formed by the gamma and epsilon chains, while a peripheral stalk is formed by the delta and b chains.</text>
</comment>
<comment type="subcellular location">
    <subcellularLocation>
        <location evidence="1">Cell inner membrane</location>
        <topology evidence="1">Peripheral membrane protein</topology>
    </subcellularLocation>
</comment>
<comment type="similarity">
    <text evidence="1">Belongs to the ATPase delta chain family.</text>
</comment>